<sequence length="242" mass="27269">MSKSRLTVFSFVRRFLLRLMVVLAVFWGGGIALFSVAPVPFSAVMVERQVSAWLHGNFRYVAHSDRVSMDQISPWMGLAVIAAEDQTFPEHWGFDVASIEKALAHNERNENRIRGASTISQQTAKNLFLWDGRSWVRKGLEAGLTLGIETVWSKKRILTVYLNIAEFGDGVFGVEAAAQRYFHKPASKLTRSEAALLAAVLPNPLRFKVSAPSGYVRSRQAWILRQMYQLGGEPFMQQHQLD</sequence>
<accession>Q8X9I1</accession>
<proteinExistence type="inferred from homology"/>
<protein>
    <recommendedName>
        <fullName evidence="1">Biosynthetic peptidoglycan transglycosylase</fullName>
        <ecNumber evidence="1">2.4.99.28</ecNumber>
    </recommendedName>
    <alternativeName>
        <fullName evidence="1">Glycan polymerase</fullName>
    </alternativeName>
    <alternativeName>
        <fullName evidence="1">Peptidoglycan glycosyltransferase MtgA</fullName>
        <shortName evidence="1">PGT</shortName>
    </alternativeName>
</protein>
<keyword id="KW-0997">Cell inner membrane</keyword>
<keyword id="KW-1003">Cell membrane</keyword>
<keyword id="KW-0133">Cell shape</keyword>
<keyword id="KW-0961">Cell wall biogenesis/degradation</keyword>
<keyword id="KW-0328">Glycosyltransferase</keyword>
<keyword id="KW-0472">Membrane</keyword>
<keyword id="KW-0573">Peptidoglycan synthesis</keyword>
<keyword id="KW-1185">Reference proteome</keyword>
<keyword id="KW-0808">Transferase</keyword>
<keyword id="KW-0812">Transmembrane</keyword>
<keyword id="KW-1133">Transmembrane helix</keyword>
<comment type="function">
    <text evidence="1">Peptidoglycan polymerase that catalyzes glycan chain elongation from lipid-linked precursors.</text>
</comment>
<comment type="catalytic activity">
    <reaction evidence="1">
        <text>[GlcNAc-(1-&gt;4)-Mur2Ac(oyl-L-Ala-gamma-D-Glu-L-Lys-D-Ala-D-Ala)](n)-di-trans,octa-cis-undecaprenyl diphosphate + beta-D-GlcNAc-(1-&gt;4)-Mur2Ac(oyl-L-Ala-gamma-D-Glu-L-Lys-D-Ala-D-Ala)-di-trans,octa-cis-undecaprenyl diphosphate = [GlcNAc-(1-&gt;4)-Mur2Ac(oyl-L-Ala-gamma-D-Glu-L-Lys-D-Ala-D-Ala)](n+1)-di-trans,octa-cis-undecaprenyl diphosphate + di-trans,octa-cis-undecaprenyl diphosphate + H(+)</text>
        <dbReference type="Rhea" id="RHEA:23708"/>
        <dbReference type="Rhea" id="RHEA-COMP:9602"/>
        <dbReference type="Rhea" id="RHEA-COMP:9603"/>
        <dbReference type="ChEBI" id="CHEBI:15378"/>
        <dbReference type="ChEBI" id="CHEBI:58405"/>
        <dbReference type="ChEBI" id="CHEBI:60033"/>
        <dbReference type="ChEBI" id="CHEBI:78435"/>
        <dbReference type="EC" id="2.4.99.28"/>
    </reaction>
</comment>
<comment type="pathway">
    <text evidence="1">Cell wall biogenesis; peptidoglycan biosynthesis.</text>
</comment>
<comment type="subcellular location">
    <subcellularLocation>
        <location evidence="1">Cell inner membrane</location>
        <topology evidence="1">Single-pass membrane protein</topology>
    </subcellularLocation>
</comment>
<comment type="similarity">
    <text evidence="1">Belongs to the glycosyltransferase 51 family.</text>
</comment>
<feature type="chain" id="PRO_0000083127" description="Biosynthetic peptidoglycan transglycosylase">
    <location>
        <begin position="1"/>
        <end position="242"/>
    </location>
</feature>
<feature type="transmembrane region" description="Helical" evidence="1">
    <location>
        <begin position="19"/>
        <end position="39"/>
    </location>
</feature>
<reference key="1">
    <citation type="journal article" date="2001" name="Nature">
        <title>Genome sequence of enterohaemorrhagic Escherichia coli O157:H7.</title>
        <authorList>
            <person name="Perna N.T."/>
            <person name="Plunkett G. III"/>
            <person name="Burland V."/>
            <person name="Mau B."/>
            <person name="Glasner J.D."/>
            <person name="Rose D.J."/>
            <person name="Mayhew G.F."/>
            <person name="Evans P.S."/>
            <person name="Gregor J."/>
            <person name="Kirkpatrick H.A."/>
            <person name="Posfai G."/>
            <person name="Hackett J."/>
            <person name="Klink S."/>
            <person name="Boutin A."/>
            <person name="Shao Y."/>
            <person name="Miller L."/>
            <person name="Grotbeck E.J."/>
            <person name="Davis N.W."/>
            <person name="Lim A."/>
            <person name="Dimalanta E.T."/>
            <person name="Potamousis K."/>
            <person name="Apodaca J."/>
            <person name="Anantharaman T.S."/>
            <person name="Lin J."/>
            <person name="Yen G."/>
            <person name="Schwartz D.C."/>
            <person name="Welch R.A."/>
            <person name="Blattner F.R."/>
        </authorList>
    </citation>
    <scope>NUCLEOTIDE SEQUENCE [LARGE SCALE GENOMIC DNA]</scope>
    <source>
        <strain>O157:H7 / EDL933 / ATCC 700927 / EHEC</strain>
    </source>
</reference>
<reference key="2">
    <citation type="journal article" date="2001" name="DNA Res.">
        <title>Complete genome sequence of enterohemorrhagic Escherichia coli O157:H7 and genomic comparison with a laboratory strain K-12.</title>
        <authorList>
            <person name="Hayashi T."/>
            <person name="Makino K."/>
            <person name="Ohnishi M."/>
            <person name="Kurokawa K."/>
            <person name="Ishii K."/>
            <person name="Yokoyama K."/>
            <person name="Han C.-G."/>
            <person name="Ohtsubo E."/>
            <person name="Nakayama K."/>
            <person name="Murata T."/>
            <person name="Tanaka M."/>
            <person name="Tobe T."/>
            <person name="Iida T."/>
            <person name="Takami H."/>
            <person name="Honda T."/>
            <person name="Sasakawa C."/>
            <person name="Ogasawara N."/>
            <person name="Yasunaga T."/>
            <person name="Kuhara S."/>
            <person name="Shiba T."/>
            <person name="Hattori M."/>
            <person name="Shinagawa H."/>
        </authorList>
    </citation>
    <scope>NUCLEOTIDE SEQUENCE [LARGE SCALE GENOMIC DNA]</scope>
    <source>
        <strain>O157:H7 / Sakai / RIMD 0509952 / EHEC</strain>
    </source>
</reference>
<name>MTGA_ECO57</name>
<gene>
    <name evidence="1" type="primary">mtgA</name>
    <name type="ordered locus">Z4571</name>
    <name type="ordered locus">ECs4087</name>
</gene>
<dbReference type="EC" id="2.4.99.28" evidence="1"/>
<dbReference type="EMBL" id="AE005174">
    <property type="protein sequence ID" value="AAG58342.1"/>
    <property type="molecule type" value="Genomic_DNA"/>
</dbReference>
<dbReference type="EMBL" id="BA000007">
    <property type="protein sequence ID" value="BAB37510.1"/>
    <property type="molecule type" value="Genomic_DNA"/>
</dbReference>
<dbReference type="PIR" id="B85985">
    <property type="entry name" value="B85985"/>
</dbReference>
<dbReference type="PIR" id="G91139">
    <property type="entry name" value="G91139"/>
</dbReference>
<dbReference type="RefSeq" id="NP_312114.1">
    <property type="nucleotide sequence ID" value="NC_002695.1"/>
</dbReference>
<dbReference type="RefSeq" id="WP_000047079.1">
    <property type="nucleotide sequence ID" value="NZ_VOAI01000014.1"/>
</dbReference>
<dbReference type="SMR" id="Q8X9I1"/>
<dbReference type="STRING" id="155864.Z4571"/>
<dbReference type="CAZy" id="GT51">
    <property type="family name" value="Glycosyltransferase Family 51"/>
</dbReference>
<dbReference type="GeneID" id="916064"/>
<dbReference type="KEGG" id="ece:Z4571"/>
<dbReference type="KEGG" id="ecs:ECs_4087"/>
<dbReference type="PATRIC" id="fig|386585.9.peg.4266"/>
<dbReference type="eggNOG" id="COG0744">
    <property type="taxonomic scope" value="Bacteria"/>
</dbReference>
<dbReference type="HOGENOM" id="CLU_006354_1_1_6"/>
<dbReference type="OMA" id="PAPKCFD"/>
<dbReference type="UniPathway" id="UPA00219"/>
<dbReference type="Proteomes" id="UP000000558">
    <property type="component" value="Chromosome"/>
</dbReference>
<dbReference type="Proteomes" id="UP000002519">
    <property type="component" value="Chromosome"/>
</dbReference>
<dbReference type="GO" id="GO:0009274">
    <property type="term" value="C:peptidoglycan-based cell wall"/>
    <property type="evidence" value="ECO:0007669"/>
    <property type="project" value="InterPro"/>
</dbReference>
<dbReference type="GO" id="GO:0005886">
    <property type="term" value="C:plasma membrane"/>
    <property type="evidence" value="ECO:0007669"/>
    <property type="project" value="UniProtKB-SubCell"/>
</dbReference>
<dbReference type="GO" id="GO:0016763">
    <property type="term" value="F:pentosyltransferase activity"/>
    <property type="evidence" value="ECO:0007669"/>
    <property type="project" value="InterPro"/>
</dbReference>
<dbReference type="GO" id="GO:0008955">
    <property type="term" value="F:peptidoglycan glycosyltransferase activity"/>
    <property type="evidence" value="ECO:0007669"/>
    <property type="project" value="UniProtKB-UniRule"/>
</dbReference>
<dbReference type="GO" id="GO:0071555">
    <property type="term" value="P:cell wall organization"/>
    <property type="evidence" value="ECO:0007669"/>
    <property type="project" value="UniProtKB-KW"/>
</dbReference>
<dbReference type="GO" id="GO:0009252">
    <property type="term" value="P:peptidoglycan biosynthetic process"/>
    <property type="evidence" value="ECO:0007669"/>
    <property type="project" value="UniProtKB-UniRule"/>
</dbReference>
<dbReference type="GO" id="GO:0008360">
    <property type="term" value="P:regulation of cell shape"/>
    <property type="evidence" value="ECO:0007669"/>
    <property type="project" value="UniProtKB-KW"/>
</dbReference>
<dbReference type="FunFam" id="1.10.3810.10:FF:000004">
    <property type="entry name" value="Biosynthetic peptidoglycan transglycosylase"/>
    <property type="match status" value="1"/>
</dbReference>
<dbReference type="Gene3D" id="1.10.3810.10">
    <property type="entry name" value="Biosynthetic peptidoglycan transglycosylase-like"/>
    <property type="match status" value="1"/>
</dbReference>
<dbReference type="HAMAP" id="MF_00766">
    <property type="entry name" value="PGT_MtgA"/>
    <property type="match status" value="1"/>
</dbReference>
<dbReference type="InterPro" id="IPR001264">
    <property type="entry name" value="Glyco_trans_51"/>
</dbReference>
<dbReference type="InterPro" id="IPR023346">
    <property type="entry name" value="Lysozyme-like_dom_sf"/>
</dbReference>
<dbReference type="InterPro" id="IPR036950">
    <property type="entry name" value="PBP_transglycosylase"/>
</dbReference>
<dbReference type="InterPro" id="IPR011812">
    <property type="entry name" value="Pep_trsgly"/>
</dbReference>
<dbReference type="NCBIfam" id="TIGR02070">
    <property type="entry name" value="mono_pep_trsgly"/>
    <property type="match status" value="1"/>
</dbReference>
<dbReference type="PANTHER" id="PTHR30400:SF0">
    <property type="entry name" value="BIOSYNTHETIC PEPTIDOGLYCAN TRANSGLYCOSYLASE"/>
    <property type="match status" value="1"/>
</dbReference>
<dbReference type="PANTHER" id="PTHR30400">
    <property type="entry name" value="MONOFUNCTIONAL BIOSYNTHETIC PEPTIDOGLYCAN TRANSGLYCOSYLASE"/>
    <property type="match status" value="1"/>
</dbReference>
<dbReference type="Pfam" id="PF00912">
    <property type="entry name" value="Transgly"/>
    <property type="match status" value="1"/>
</dbReference>
<dbReference type="SUPFAM" id="SSF53955">
    <property type="entry name" value="Lysozyme-like"/>
    <property type="match status" value="1"/>
</dbReference>
<evidence type="ECO:0000255" key="1">
    <source>
        <dbReference type="HAMAP-Rule" id="MF_00766"/>
    </source>
</evidence>
<organism>
    <name type="scientific">Escherichia coli O157:H7</name>
    <dbReference type="NCBI Taxonomy" id="83334"/>
    <lineage>
        <taxon>Bacteria</taxon>
        <taxon>Pseudomonadati</taxon>
        <taxon>Pseudomonadota</taxon>
        <taxon>Gammaproteobacteria</taxon>
        <taxon>Enterobacterales</taxon>
        <taxon>Enterobacteriaceae</taxon>
        <taxon>Escherichia</taxon>
    </lineage>
</organism>